<sequence>MTRFLLCSFALVLLYPSGIDMYLVGLPRIAQDLGASEAQLHIAFSVYLAGMASAMLFAGRIADRSGRKPVAIVGAAIFVIASLICAQVHTSSHFLIGRFIQGIAAGSCYVVAFAILRDTLDDRRRAKVLSLLNGITCIIPVLAPVLGHLIMLKYPWQSLFYTMTGMGVMVAVLSVFILRETRPTAPPQAALPQHDAGESLLNRFFLSRLLITTLSVTVILTYVNVSPVLMMEEMGFDRGTYSMAMALMAMISMAVSFSTPFVLSLFNPRTLMLTSQVLFLAAGVTLSLATRQAVTLIGLGMICAGFSVGFGVAMSQALGPFTLRAGVASSVLGIAQVCGSSLWIWLAAIIGLSAMNMLIGILIACSIVSLVLLLVVTPPRVAQYDEEAAVES</sequence>
<evidence type="ECO:0000255" key="1">
    <source>
        <dbReference type="HAMAP-Rule" id="MF_01530"/>
    </source>
</evidence>
<protein>
    <recommendedName>
        <fullName evidence="1">Multidrug resistance protein MdtL</fullName>
    </recommendedName>
</protein>
<comment type="subcellular location">
    <subcellularLocation>
        <location evidence="1">Cell inner membrane</location>
        <topology evidence="1">Multi-pass membrane protein</topology>
    </subcellularLocation>
</comment>
<comment type="similarity">
    <text evidence="1">Belongs to the major facilitator superfamily. DHA1 family. MdtL (TC 2.A.1.2.22) subfamily.</text>
</comment>
<name>MDTL_KLEP7</name>
<dbReference type="EMBL" id="CP000647">
    <property type="protein sequence ID" value="ABR79503.1"/>
    <property type="molecule type" value="Genomic_DNA"/>
</dbReference>
<dbReference type="RefSeq" id="WP_015959187.1">
    <property type="nucleotide sequence ID" value="NC_009648.1"/>
</dbReference>
<dbReference type="SMR" id="A6TG19"/>
<dbReference type="STRING" id="272620.KPN_04120"/>
<dbReference type="PaxDb" id="272620-KPN_04120"/>
<dbReference type="EnsemblBacteria" id="ABR79503">
    <property type="protein sequence ID" value="ABR79503"/>
    <property type="gene ID" value="KPN_04120"/>
</dbReference>
<dbReference type="KEGG" id="kpn:KPN_04120"/>
<dbReference type="HOGENOM" id="CLU_001265_47_1_6"/>
<dbReference type="Proteomes" id="UP000000265">
    <property type="component" value="Chromosome"/>
</dbReference>
<dbReference type="GO" id="GO:0005886">
    <property type="term" value="C:plasma membrane"/>
    <property type="evidence" value="ECO:0007669"/>
    <property type="project" value="UniProtKB-SubCell"/>
</dbReference>
<dbReference type="GO" id="GO:0022857">
    <property type="term" value="F:transmembrane transporter activity"/>
    <property type="evidence" value="ECO:0007669"/>
    <property type="project" value="UniProtKB-UniRule"/>
</dbReference>
<dbReference type="CDD" id="cd17320">
    <property type="entry name" value="MFS_MdfA_MDR_like"/>
    <property type="match status" value="1"/>
</dbReference>
<dbReference type="FunFam" id="1.20.1720.10:FF:000003">
    <property type="entry name" value="Multidrug resistance protein MdtL"/>
    <property type="match status" value="1"/>
</dbReference>
<dbReference type="Gene3D" id="1.20.1720.10">
    <property type="entry name" value="Multidrug resistance protein D"/>
    <property type="match status" value="1"/>
</dbReference>
<dbReference type="HAMAP" id="MF_01530">
    <property type="entry name" value="MFS_MdtL"/>
    <property type="match status" value="1"/>
</dbReference>
<dbReference type="InterPro" id="IPR011701">
    <property type="entry name" value="MFS"/>
</dbReference>
<dbReference type="InterPro" id="IPR020846">
    <property type="entry name" value="MFS_dom"/>
</dbReference>
<dbReference type="InterPro" id="IPR036259">
    <property type="entry name" value="MFS_trans_sf"/>
</dbReference>
<dbReference type="InterPro" id="IPR023697">
    <property type="entry name" value="Multidrug-R_MdtL"/>
</dbReference>
<dbReference type="NCBIfam" id="NF007782">
    <property type="entry name" value="PRK10473.1"/>
    <property type="match status" value="1"/>
</dbReference>
<dbReference type="PANTHER" id="PTHR42718">
    <property type="entry name" value="MAJOR FACILITATOR SUPERFAMILY MULTIDRUG TRANSPORTER MFSC"/>
    <property type="match status" value="1"/>
</dbReference>
<dbReference type="PANTHER" id="PTHR42718:SF9">
    <property type="entry name" value="MAJOR FACILITATOR SUPERFAMILY MULTIDRUG TRANSPORTER MFSC"/>
    <property type="match status" value="1"/>
</dbReference>
<dbReference type="Pfam" id="PF07690">
    <property type="entry name" value="MFS_1"/>
    <property type="match status" value="1"/>
</dbReference>
<dbReference type="SUPFAM" id="SSF103473">
    <property type="entry name" value="MFS general substrate transporter"/>
    <property type="match status" value="1"/>
</dbReference>
<dbReference type="PROSITE" id="PS50850">
    <property type="entry name" value="MFS"/>
    <property type="match status" value="1"/>
</dbReference>
<organism>
    <name type="scientific">Klebsiella pneumoniae subsp. pneumoniae (strain ATCC 700721 / MGH 78578)</name>
    <dbReference type="NCBI Taxonomy" id="272620"/>
    <lineage>
        <taxon>Bacteria</taxon>
        <taxon>Pseudomonadati</taxon>
        <taxon>Pseudomonadota</taxon>
        <taxon>Gammaproteobacteria</taxon>
        <taxon>Enterobacterales</taxon>
        <taxon>Enterobacteriaceae</taxon>
        <taxon>Klebsiella/Raoultella group</taxon>
        <taxon>Klebsiella</taxon>
        <taxon>Klebsiella pneumoniae complex</taxon>
    </lineage>
</organism>
<gene>
    <name evidence="1" type="primary">mdtL</name>
    <name type="ordered locus">KPN78578_40790</name>
    <name type="ORF">KPN_04120</name>
</gene>
<reference key="1">
    <citation type="submission" date="2006-09" db="EMBL/GenBank/DDBJ databases">
        <authorList>
            <consortium name="The Klebsiella pneumonia Genome Sequencing Project"/>
            <person name="McClelland M."/>
            <person name="Sanderson E.K."/>
            <person name="Spieth J."/>
            <person name="Clifton W.S."/>
            <person name="Latreille P."/>
            <person name="Sabo A."/>
            <person name="Pepin K."/>
            <person name="Bhonagiri V."/>
            <person name="Porwollik S."/>
            <person name="Ali J."/>
            <person name="Wilson R.K."/>
        </authorList>
    </citation>
    <scope>NUCLEOTIDE SEQUENCE [LARGE SCALE GENOMIC DNA]</scope>
    <source>
        <strain>ATCC 700721 / MGH 78578</strain>
    </source>
</reference>
<proteinExistence type="inferred from homology"/>
<accession>A6TG19</accession>
<keyword id="KW-0997">Cell inner membrane</keyword>
<keyword id="KW-1003">Cell membrane</keyword>
<keyword id="KW-0472">Membrane</keyword>
<keyword id="KW-0812">Transmembrane</keyword>
<keyword id="KW-1133">Transmembrane helix</keyword>
<keyword id="KW-0813">Transport</keyword>
<feature type="chain" id="PRO_1000068687" description="Multidrug resistance protein MdtL">
    <location>
        <begin position="1"/>
        <end position="392"/>
    </location>
</feature>
<feature type="transmembrane region" description="Helical" evidence="1">
    <location>
        <begin position="4"/>
        <end position="24"/>
    </location>
</feature>
<feature type="transmembrane region" description="Helical" evidence="1">
    <location>
        <begin position="38"/>
        <end position="58"/>
    </location>
</feature>
<feature type="transmembrane region" description="Helical" evidence="1">
    <location>
        <begin position="69"/>
        <end position="89"/>
    </location>
</feature>
<feature type="transmembrane region" description="Helical" evidence="1">
    <location>
        <begin position="95"/>
        <end position="115"/>
    </location>
</feature>
<feature type="transmembrane region" description="Helical" evidence="1">
    <location>
        <begin position="131"/>
        <end position="151"/>
    </location>
</feature>
<feature type="transmembrane region" description="Helical" evidence="1">
    <location>
        <begin position="158"/>
        <end position="178"/>
    </location>
</feature>
<feature type="transmembrane region" description="Helical" evidence="1">
    <location>
        <begin position="209"/>
        <end position="229"/>
    </location>
</feature>
<feature type="transmembrane region" description="Helical" evidence="1">
    <location>
        <begin position="246"/>
        <end position="266"/>
    </location>
</feature>
<feature type="transmembrane region" description="Helical" evidence="1">
    <location>
        <begin position="270"/>
        <end position="290"/>
    </location>
</feature>
<feature type="transmembrane region" description="Helical" evidence="1">
    <location>
        <begin position="294"/>
        <end position="314"/>
    </location>
</feature>
<feature type="transmembrane region" description="Helical" evidence="1">
    <location>
        <begin position="331"/>
        <end position="351"/>
    </location>
</feature>
<feature type="transmembrane region" description="Helical" evidence="1">
    <location>
        <begin position="357"/>
        <end position="377"/>
    </location>
</feature>